<sequence>MANIVFKLSDKDITTLMSRITFDTENLPQGMKARAKYQNTTVNIYQSGKVMFQGNHAEAVSKELLPQHSQLNTNKTKKKNMANSSLEQTLMYDQFNCIGSDEAGSGDYFGPLTVCAAFVTKEHVPILKTLGVDDSKKLTDTKIVELAEQLVAFIPHSLLTLHNDKYNIQQAKGWTQVKMKAVLHNEAIKNVLEKIDSSQLDYIVIDQFAKREVYSHYALSDIPLPKKTKFETKGESKSLAIAVASIISRYAFITYMDQISKYINMTIPKGAGAKVDVIAAKIIKKYGLSRLDTISKKHFKNREKAQKILKPL</sequence>
<comment type="function">
    <text evidence="1">Endonuclease that specifically degrades the RNA of RNA-DNA hybrids.</text>
</comment>
<comment type="catalytic activity">
    <reaction evidence="1">
        <text>Endonucleolytic cleavage to 5'-phosphomonoester.</text>
        <dbReference type="EC" id="3.1.26.4"/>
    </reaction>
</comment>
<comment type="cofactor">
    <cofactor evidence="1">
        <name>Mn(2+)</name>
        <dbReference type="ChEBI" id="CHEBI:29035"/>
    </cofactor>
    <cofactor evidence="1">
        <name>Mg(2+)</name>
        <dbReference type="ChEBI" id="CHEBI:18420"/>
    </cofactor>
    <text evidence="1">Manganese or magnesium. Binds 1 divalent metal ion per monomer in the absence of substrate. May bind a second metal ion after substrate binding.</text>
</comment>
<comment type="subcellular location">
    <subcellularLocation>
        <location evidence="1">Cytoplasm</location>
    </subcellularLocation>
</comment>
<comment type="similarity">
    <text evidence="1">Belongs to the RNase HII family. RnhC subfamily.</text>
</comment>
<gene>
    <name evidence="1" type="primary">rnhC</name>
    <name type="ordered locus">SA0987</name>
</gene>
<organism>
    <name type="scientific">Staphylococcus aureus (strain N315)</name>
    <dbReference type="NCBI Taxonomy" id="158879"/>
    <lineage>
        <taxon>Bacteria</taxon>
        <taxon>Bacillati</taxon>
        <taxon>Bacillota</taxon>
        <taxon>Bacilli</taxon>
        <taxon>Bacillales</taxon>
        <taxon>Staphylococcaceae</taxon>
        <taxon>Staphylococcus</taxon>
    </lineage>
</organism>
<name>RNH3_STAAN</name>
<proteinExistence type="inferred from homology"/>
<protein>
    <recommendedName>
        <fullName evidence="1">Ribonuclease HIII</fullName>
        <shortName evidence="1">RNase HIII</shortName>
        <ecNumber evidence="1">3.1.26.4</ecNumber>
    </recommendedName>
</protein>
<dbReference type="EC" id="3.1.26.4" evidence="1"/>
<dbReference type="EMBL" id="BA000018">
    <property type="protein sequence ID" value="BAB42236.1"/>
    <property type="molecule type" value="Genomic_DNA"/>
</dbReference>
<dbReference type="PIR" id="H89884">
    <property type="entry name" value="H89884"/>
</dbReference>
<dbReference type="RefSeq" id="WP_001284282.1">
    <property type="nucleotide sequence ID" value="NC_002745.2"/>
</dbReference>
<dbReference type="SMR" id="Q7A647"/>
<dbReference type="EnsemblBacteria" id="BAB42236">
    <property type="protein sequence ID" value="BAB42236"/>
    <property type="gene ID" value="BAB42236"/>
</dbReference>
<dbReference type="KEGG" id="sau:SA0987"/>
<dbReference type="HOGENOM" id="CLU_059546_1_0_9"/>
<dbReference type="GO" id="GO:0005737">
    <property type="term" value="C:cytoplasm"/>
    <property type="evidence" value="ECO:0007669"/>
    <property type="project" value="UniProtKB-SubCell"/>
</dbReference>
<dbReference type="GO" id="GO:0032299">
    <property type="term" value="C:ribonuclease H2 complex"/>
    <property type="evidence" value="ECO:0007669"/>
    <property type="project" value="TreeGrafter"/>
</dbReference>
<dbReference type="GO" id="GO:0000287">
    <property type="term" value="F:magnesium ion binding"/>
    <property type="evidence" value="ECO:0007669"/>
    <property type="project" value="UniProtKB-UniRule"/>
</dbReference>
<dbReference type="GO" id="GO:0003723">
    <property type="term" value="F:RNA binding"/>
    <property type="evidence" value="ECO:0007669"/>
    <property type="project" value="InterPro"/>
</dbReference>
<dbReference type="GO" id="GO:0004523">
    <property type="term" value="F:RNA-DNA hybrid ribonuclease activity"/>
    <property type="evidence" value="ECO:0007669"/>
    <property type="project" value="UniProtKB-UniRule"/>
</dbReference>
<dbReference type="GO" id="GO:0043137">
    <property type="term" value="P:DNA replication, removal of RNA primer"/>
    <property type="evidence" value="ECO:0007669"/>
    <property type="project" value="TreeGrafter"/>
</dbReference>
<dbReference type="GO" id="GO:0006298">
    <property type="term" value="P:mismatch repair"/>
    <property type="evidence" value="ECO:0007669"/>
    <property type="project" value="TreeGrafter"/>
</dbReference>
<dbReference type="CDD" id="cd06590">
    <property type="entry name" value="RNase_HII_bacteria_HIII_like"/>
    <property type="match status" value="1"/>
</dbReference>
<dbReference type="CDD" id="cd14796">
    <property type="entry name" value="RNAse_HIII_N"/>
    <property type="match status" value="1"/>
</dbReference>
<dbReference type="FunFam" id="3.30.420.10:FF:000047">
    <property type="entry name" value="Ribonuclease HIII"/>
    <property type="match status" value="1"/>
</dbReference>
<dbReference type="Gene3D" id="3.30.420.10">
    <property type="entry name" value="Ribonuclease H-like superfamily/Ribonuclease H"/>
    <property type="match status" value="1"/>
</dbReference>
<dbReference type="Gene3D" id="3.30.310.10">
    <property type="entry name" value="TATA-Binding Protein"/>
    <property type="match status" value="1"/>
</dbReference>
<dbReference type="HAMAP" id="MF_00053">
    <property type="entry name" value="RNase_HIII"/>
    <property type="match status" value="1"/>
</dbReference>
<dbReference type="InterPro" id="IPR001352">
    <property type="entry name" value="RNase_HII/HIII"/>
</dbReference>
<dbReference type="InterPro" id="IPR024567">
    <property type="entry name" value="RNase_HII/HIII_dom"/>
</dbReference>
<dbReference type="InterPro" id="IPR004641">
    <property type="entry name" value="RNase_HIII"/>
</dbReference>
<dbReference type="InterPro" id="IPR024568">
    <property type="entry name" value="RNase_HIII_N"/>
</dbReference>
<dbReference type="InterPro" id="IPR012337">
    <property type="entry name" value="RNaseH-like_sf"/>
</dbReference>
<dbReference type="InterPro" id="IPR036397">
    <property type="entry name" value="RNaseH_sf"/>
</dbReference>
<dbReference type="InterPro" id="IPR012295">
    <property type="entry name" value="TBP_dom_sf"/>
</dbReference>
<dbReference type="NCBIfam" id="TIGR00716">
    <property type="entry name" value="rnhC"/>
    <property type="match status" value="1"/>
</dbReference>
<dbReference type="PANTHER" id="PTHR10954:SF23">
    <property type="entry name" value="RIBONUCLEASE"/>
    <property type="match status" value="1"/>
</dbReference>
<dbReference type="PANTHER" id="PTHR10954">
    <property type="entry name" value="RIBONUCLEASE H2 SUBUNIT A"/>
    <property type="match status" value="1"/>
</dbReference>
<dbReference type="Pfam" id="PF11858">
    <property type="entry name" value="DUF3378"/>
    <property type="match status" value="1"/>
</dbReference>
<dbReference type="Pfam" id="PF01351">
    <property type="entry name" value="RNase_HII"/>
    <property type="match status" value="1"/>
</dbReference>
<dbReference type="PIRSF" id="PIRSF037748">
    <property type="entry name" value="RnhC"/>
    <property type="match status" value="1"/>
</dbReference>
<dbReference type="SUPFAM" id="SSF53098">
    <property type="entry name" value="Ribonuclease H-like"/>
    <property type="match status" value="1"/>
</dbReference>
<dbReference type="PROSITE" id="PS51975">
    <property type="entry name" value="RNASE_H_2"/>
    <property type="match status" value="1"/>
</dbReference>
<evidence type="ECO:0000255" key="1">
    <source>
        <dbReference type="HAMAP-Rule" id="MF_00053"/>
    </source>
</evidence>
<evidence type="ECO:0000255" key="2">
    <source>
        <dbReference type="PROSITE-ProRule" id="PRU01319"/>
    </source>
</evidence>
<feature type="chain" id="PRO_0000111693" description="Ribonuclease HIII">
    <location>
        <begin position="1"/>
        <end position="312"/>
    </location>
</feature>
<feature type="domain" description="RNase H type-2" evidence="2">
    <location>
        <begin position="95"/>
        <end position="311"/>
    </location>
</feature>
<feature type="binding site" evidence="1">
    <location>
        <position position="101"/>
    </location>
    <ligand>
        <name>a divalent metal cation</name>
        <dbReference type="ChEBI" id="CHEBI:60240"/>
    </ligand>
</feature>
<feature type="binding site" evidence="1">
    <location>
        <position position="102"/>
    </location>
    <ligand>
        <name>a divalent metal cation</name>
        <dbReference type="ChEBI" id="CHEBI:60240"/>
    </ligand>
</feature>
<feature type="binding site" evidence="1">
    <location>
        <position position="206"/>
    </location>
    <ligand>
        <name>a divalent metal cation</name>
        <dbReference type="ChEBI" id="CHEBI:60240"/>
    </ligand>
</feature>
<accession>Q7A647</accession>
<reference key="1">
    <citation type="journal article" date="2001" name="Lancet">
        <title>Whole genome sequencing of meticillin-resistant Staphylococcus aureus.</title>
        <authorList>
            <person name="Kuroda M."/>
            <person name="Ohta T."/>
            <person name="Uchiyama I."/>
            <person name="Baba T."/>
            <person name="Yuzawa H."/>
            <person name="Kobayashi I."/>
            <person name="Cui L."/>
            <person name="Oguchi A."/>
            <person name="Aoki K."/>
            <person name="Nagai Y."/>
            <person name="Lian J.-Q."/>
            <person name="Ito T."/>
            <person name="Kanamori M."/>
            <person name="Matsumaru H."/>
            <person name="Maruyama A."/>
            <person name="Murakami H."/>
            <person name="Hosoyama A."/>
            <person name="Mizutani-Ui Y."/>
            <person name="Takahashi N.K."/>
            <person name="Sawano T."/>
            <person name="Inoue R."/>
            <person name="Kaito C."/>
            <person name="Sekimizu K."/>
            <person name="Hirakawa H."/>
            <person name="Kuhara S."/>
            <person name="Goto S."/>
            <person name="Yabuzaki J."/>
            <person name="Kanehisa M."/>
            <person name="Yamashita A."/>
            <person name="Oshima K."/>
            <person name="Furuya K."/>
            <person name="Yoshino C."/>
            <person name="Shiba T."/>
            <person name="Hattori M."/>
            <person name="Ogasawara N."/>
            <person name="Hayashi H."/>
            <person name="Hiramatsu K."/>
        </authorList>
    </citation>
    <scope>NUCLEOTIDE SEQUENCE [LARGE SCALE GENOMIC DNA]</scope>
    <source>
        <strain>N315</strain>
    </source>
</reference>
<keyword id="KW-0963">Cytoplasm</keyword>
<keyword id="KW-0255">Endonuclease</keyword>
<keyword id="KW-0378">Hydrolase</keyword>
<keyword id="KW-0460">Magnesium</keyword>
<keyword id="KW-0479">Metal-binding</keyword>
<keyword id="KW-0540">Nuclease</keyword>